<sequence>MAKQSVVKTKKRVKRVITDGVAHICASFNNTIVTITDRQGNSLFWCTSGASGFRGSRKCTPFAAQVAAEKAGRAVLDYGMKSLEVRINGPGPGRESAVRSLSNVGYKITNIIDVTPIPHNGCRPPKKRRV</sequence>
<reference key="1">
    <citation type="journal article" date="2010" name="J. Bacteriol.">
        <title>Whole genome sequences of two Xylella fastidiosa strains (M12 and M23) causing almond leaf scorch disease in California.</title>
        <authorList>
            <person name="Chen J."/>
            <person name="Xie G."/>
            <person name="Han S."/>
            <person name="Chertkov O."/>
            <person name="Sims D."/>
            <person name="Civerolo E.L."/>
        </authorList>
    </citation>
    <scope>NUCLEOTIDE SEQUENCE [LARGE SCALE GENOMIC DNA]</scope>
    <source>
        <strain>M12</strain>
    </source>
</reference>
<comment type="function">
    <text evidence="1">Located on the platform of the 30S subunit, it bridges several disparate RNA helices of the 16S rRNA. Forms part of the Shine-Dalgarno cleft in the 70S ribosome.</text>
</comment>
<comment type="subunit">
    <text evidence="1">Part of the 30S ribosomal subunit. Interacts with proteins S7 and S18. Binds to IF-3.</text>
</comment>
<comment type="similarity">
    <text evidence="1">Belongs to the universal ribosomal protein uS11 family.</text>
</comment>
<accession>B0U5M1</accession>
<gene>
    <name evidence="1" type="primary">rpsK</name>
    <name type="ordered locus">Xfasm12_0516</name>
</gene>
<feature type="chain" id="PRO_1000141162" description="Small ribosomal subunit protein uS11">
    <location>
        <begin position="1"/>
        <end position="130"/>
    </location>
</feature>
<evidence type="ECO:0000255" key="1">
    <source>
        <dbReference type="HAMAP-Rule" id="MF_01310"/>
    </source>
</evidence>
<evidence type="ECO:0000305" key="2"/>
<organism>
    <name type="scientific">Xylella fastidiosa (strain M12)</name>
    <dbReference type="NCBI Taxonomy" id="405440"/>
    <lineage>
        <taxon>Bacteria</taxon>
        <taxon>Pseudomonadati</taxon>
        <taxon>Pseudomonadota</taxon>
        <taxon>Gammaproteobacteria</taxon>
        <taxon>Lysobacterales</taxon>
        <taxon>Lysobacteraceae</taxon>
        <taxon>Xylella</taxon>
    </lineage>
</organism>
<name>RS11_XYLFM</name>
<keyword id="KW-0687">Ribonucleoprotein</keyword>
<keyword id="KW-0689">Ribosomal protein</keyword>
<keyword id="KW-0694">RNA-binding</keyword>
<keyword id="KW-0699">rRNA-binding</keyword>
<protein>
    <recommendedName>
        <fullName evidence="1">Small ribosomal subunit protein uS11</fullName>
    </recommendedName>
    <alternativeName>
        <fullName evidence="2">30S ribosomal protein S11</fullName>
    </alternativeName>
</protein>
<dbReference type="EMBL" id="CP000941">
    <property type="protein sequence ID" value="ACA11525.1"/>
    <property type="molecule type" value="Genomic_DNA"/>
</dbReference>
<dbReference type="RefSeq" id="WP_004086543.1">
    <property type="nucleotide sequence ID" value="NC_010513.1"/>
</dbReference>
<dbReference type="SMR" id="B0U5M1"/>
<dbReference type="KEGG" id="xfm:Xfasm12_0516"/>
<dbReference type="HOGENOM" id="CLU_072439_5_0_6"/>
<dbReference type="GO" id="GO:1990904">
    <property type="term" value="C:ribonucleoprotein complex"/>
    <property type="evidence" value="ECO:0007669"/>
    <property type="project" value="UniProtKB-KW"/>
</dbReference>
<dbReference type="GO" id="GO:0005840">
    <property type="term" value="C:ribosome"/>
    <property type="evidence" value="ECO:0007669"/>
    <property type="project" value="UniProtKB-KW"/>
</dbReference>
<dbReference type="GO" id="GO:0019843">
    <property type="term" value="F:rRNA binding"/>
    <property type="evidence" value="ECO:0007669"/>
    <property type="project" value="UniProtKB-UniRule"/>
</dbReference>
<dbReference type="GO" id="GO:0003735">
    <property type="term" value="F:structural constituent of ribosome"/>
    <property type="evidence" value="ECO:0007669"/>
    <property type="project" value="InterPro"/>
</dbReference>
<dbReference type="GO" id="GO:0006412">
    <property type="term" value="P:translation"/>
    <property type="evidence" value="ECO:0007669"/>
    <property type="project" value="UniProtKB-UniRule"/>
</dbReference>
<dbReference type="FunFam" id="3.30.420.80:FF:000001">
    <property type="entry name" value="30S ribosomal protein S11"/>
    <property type="match status" value="1"/>
</dbReference>
<dbReference type="Gene3D" id="3.30.420.80">
    <property type="entry name" value="Ribosomal protein S11"/>
    <property type="match status" value="1"/>
</dbReference>
<dbReference type="HAMAP" id="MF_01310">
    <property type="entry name" value="Ribosomal_uS11"/>
    <property type="match status" value="1"/>
</dbReference>
<dbReference type="InterPro" id="IPR001971">
    <property type="entry name" value="Ribosomal_uS11"/>
</dbReference>
<dbReference type="InterPro" id="IPR019981">
    <property type="entry name" value="Ribosomal_uS11_bac-type"/>
</dbReference>
<dbReference type="InterPro" id="IPR018102">
    <property type="entry name" value="Ribosomal_uS11_CS"/>
</dbReference>
<dbReference type="InterPro" id="IPR036967">
    <property type="entry name" value="Ribosomal_uS11_sf"/>
</dbReference>
<dbReference type="NCBIfam" id="NF003698">
    <property type="entry name" value="PRK05309.1"/>
    <property type="match status" value="1"/>
</dbReference>
<dbReference type="NCBIfam" id="TIGR03632">
    <property type="entry name" value="uS11_bact"/>
    <property type="match status" value="1"/>
</dbReference>
<dbReference type="PANTHER" id="PTHR11759">
    <property type="entry name" value="40S RIBOSOMAL PROTEIN S14/30S RIBOSOMAL PROTEIN S11"/>
    <property type="match status" value="1"/>
</dbReference>
<dbReference type="Pfam" id="PF00411">
    <property type="entry name" value="Ribosomal_S11"/>
    <property type="match status" value="1"/>
</dbReference>
<dbReference type="PIRSF" id="PIRSF002131">
    <property type="entry name" value="Ribosomal_S11"/>
    <property type="match status" value="1"/>
</dbReference>
<dbReference type="SUPFAM" id="SSF53137">
    <property type="entry name" value="Translational machinery components"/>
    <property type="match status" value="1"/>
</dbReference>
<dbReference type="PROSITE" id="PS00054">
    <property type="entry name" value="RIBOSOMAL_S11"/>
    <property type="match status" value="1"/>
</dbReference>
<proteinExistence type="inferred from homology"/>